<proteinExistence type="inferred from homology"/>
<comment type="function">
    <text evidence="1">NDH-1 shuttles electrons from NADH, via FMN and iron-sulfur (Fe-S) centers, to quinones in the respiratory chain. The immediate electron acceptor for the enzyme in this species is believed to be ubiquinone. Couples the redox reaction to proton translocation (for every two electrons transferred, four hydrogen ions are translocated across the cytoplasmic membrane), and thus conserves the redox energy in a proton gradient.</text>
</comment>
<comment type="catalytic activity">
    <reaction evidence="1">
        <text>a quinone + NADH + 5 H(+)(in) = a quinol + NAD(+) + 4 H(+)(out)</text>
        <dbReference type="Rhea" id="RHEA:57888"/>
        <dbReference type="ChEBI" id="CHEBI:15378"/>
        <dbReference type="ChEBI" id="CHEBI:24646"/>
        <dbReference type="ChEBI" id="CHEBI:57540"/>
        <dbReference type="ChEBI" id="CHEBI:57945"/>
        <dbReference type="ChEBI" id="CHEBI:132124"/>
    </reaction>
</comment>
<comment type="subunit">
    <text evidence="1">NDH-1 is composed of 14 different subunits. Subunits NuoA, H, J, K, L, M, N constitute the membrane sector of the complex.</text>
</comment>
<comment type="subcellular location">
    <subcellularLocation>
        <location evidence="1">Cell inner membrane</location>
        <topology evidence="1">Multi-pass membrane protein</topology>
    </subcellularLocation>
</comment>
<comment type="similarity">
    <text evidence="1">Belongs to the complex I subunit 2 family.</text>
</comment>
<protein>
    <recommendedName>
        <fullName evidence="1">NADH-quinone oxidoreductase subunit N</fullName>
        <ecNumber evidence="1">7.1.1.-</ecNumber>
    </recommendedName>
    <alternativeName>
        <fullName evidence="1">NADH dehydrogenase I subunit N</fullName>
    </alternativeName>
    <alternativeName>
        <fullName evidence="1">NDH-1 subunit N</fullName>
    </alternativeName>
</protein>
<name>NUON_RUTMC</name>
<sequence>MNNFIEFDTSSLWIALPEIFLLSAIVIVLLIDLFLDKNFKQVTYYLIQLSLFITGLLAFNLIDHPQIIIFGGSFVLDNMASVFKVFMMAATMVAMVYSRHYLRTHSLFRGEYFVLVLLSVLGMMVMVSGYSLLTLYLGLEILSLSLYALIAIARERADAIEAALKYFVLGAIASGLLLYGMSMIYGISGSLNINDIASFASNTNLDSRETLIINFGLVFLVIGIAFKLGAVPFHMWVPDVYQGAPTSVTLFISTVPKIAAFAMLVRILVDGLDSMHAYWSDLFMVLSILSIALGSVVALMQSNIKRMLAYSTISHVGFIMLGFVAGTPIGYGAAAFYMLVYVLMSLAAFGMIILLNKQGFEIDQISDFKGLNKHAPWFALMMLIIILSMAGVPPLVGFYSKFFILQQVVSAGFITIAVIVVIFAVISAYYYLQIIKSMYFDETDKKITIYASIDIQLVLSINAILILAVGLFPDFWMKLALSLF</sequence>
<accession>A1AVS5</accession>
<feature type="chain" id="PRO_0000391218" description="NADH-quinone oxidoreductase subunit N">
    <location>
        <begin position="1"/>
        <end position="484"/>
    </location>
</feature>
<feature type="transmembrane region" description="Helical" evidence="1">
    <location>
        <begin position="11"/>
        <end position="31"/>
    </location>
</feature>
<feature type="transmembrane region" description="Helical" evidence="1">
    <location>
        <begin position="42"/>
        <end position="62"/>
    </location>
</feature>
<feature type="transmembrane region" description="Helical" evidence="1">
    <location>
        <begin position="79"/>
        <end position="98"/>
    </location>
</feature>
<feature type="transmembrane region" description="Helical" evidence="1">
    <location>
        <begin position="113"/>
        <end position="133"/>
    </location>
</feature>
<feature type="transmembrane region" description="Helical" evidence="1">
    <location>
        <begin position="134"/>
        <end position="154"/>
    </location>
</feature>
<feature type="transmembrane region" description="Helical" evidence="1">
    <location>
        <begin position="167"/>
        <end position="187"/>
    </location>
</feature>
<feature type="transmembrane region" description="Helical" evidence="1">
    <location>
        <begin position="211"/>
        <end position="231"/>
    </location>
</feature>
<feature type="transmembrane region" description="Helical" evidence="1">
    <location>
        <begin position="248"/>
        <end position="268"/>
    </location>
</feature>
<feature type="transmembrane region" description="Helical" evidence="1">
    <location>
        <begin position="279"/>
        <end position="299"/>
    </location>
</feature>
<feature type="transmembrane region" description="Helical" evidence="1">
    <location>
        <begin position="313"/>
        <end position="333"/>
    </location>
</feature>
<feature type="transmembrane region" description="Helical" evidence="1">
    <location>
        <begin position="335"/>
        <end position="355"/>
    </location>
</feature>
<feature type="transmembrane region" description="Helical" evidence="1">
    <location>
        <begin position="378"/>
        <end position="398"/>
    </location>
</feature>
<feature type="transmembrane region" description="Helical" evidence="1">
    <location>
        <begin position="408"/>
        <end position="428"/>
    </location>
</feature>
<feature type="transmembrane region" description="Helical" evidence="1">
    <location>
        <begin position="457"/>
        <end position="477"/>
    </location>
</feature>
<reference key="1">
    <citation type="journal article" date="2007" name="Science">
        <title>The Calyptogena magnifica chemoautotrophic symbiont genome.</title>
        <authorList>
            <person name="Newton I.L.G."/>
            <person name="Woyke T."/>
            <person name="Auchtung T.A."/>
            <person name="Dilly G.F."/>
            <person name="Dutton R.J."/>
            <person name="Fisher M.C."/>
            <person name="Fontanez K.M."/>
            <person name="Lau E."/>
            <person name="Stewart F.J."/>
            <person name="Richardson P.M."/>
            <person name="Barry K.W."/>
            <person name="Saunders E."/>
            <person name="Detter J.C."/>
            <person name="Wu D."/>
            <person name="Eisen J.A."/>
            <person name="Cavanaugh C.M."/>
        </authorList>
    </citation>
    <scope>NUCLEOTIDE SEQUENCE [LARGE SCALE GENOMIC DNA]</scope>
</reference>
<dbReference type="EC" id="7.1.1.-" evidence="1"/>
<dbReference type="EMBL" id="CP000488">
    <property type="protein sequence ID" value="ABL02032.1"/>
    <property type="molecule type" value="Genomic_DNA"/>
</dbReference>
<dbReference type="RefSeq" id="WP_011737657.1">
    <property type="nucleotide sequence ID" value="NC_008610.1"/>
</dbReference>
<dbReference type="SMR" id="A1AVS5"/>
<dbReference type="STRING" id="413404.Rmag_0250"/>
<dbReference type="KEGG" id="rma:Rmag_0250"/>
<dbReference type="eggNOG" id="COG1007">
    <property type="taxonomic scope" value="Bacteria"/>
</dbReference>
<dbReference type="HOGENOM" id="CLU_007100_1_3_6"/>
<dbReference type="OrthoDB" id="9768329at2"/>
<dbReference type="Proteomes" id="UP000002587">
    <property type="component" value="Chromosome"/>
</dbReference>
<dbReference type="GO" id="GO:0005886">
    <property type="term" value="C:plasma membrane"/>
    <property type="evidence" value="ECO:0007669"/>
    <property type="project" value="UniProtKB-SubCell"/>
</dbReference>
<dbReference type="GO" id="GO:0008137">
    <property type="term" value="F:NADH dehydrogenase (ubiquinone) activity"/>
    <property type="evidence" value="ECO:0007669"/>
    <property type="project" value="InterPro"/>
</dbReference>
<dbReference type="GO" id="GO:0050136">
    <property type="term" value="F:NADH:ubiquinone reductase (non-electrogenic) activity"/>
    <property type="evidence" value="ECO:0007669"/>
    <property type="project" value="UniProtKB-UniRule"/>
</dbReference>
<dbReference type="GO" id="GO:0048038">
    <property type="term" value="F:quinone binding"/>
    <property type="evidence" value="ECO:0007669"/>
    <property type="project" value="UniProtKB-KW"/>
</dbReference>
<dbReference type="GO" id="GO:0042773">
    <property type="term" value="P:ATP synthesis coupled electron transport"/>
    <property type="evidence" value="ECO:0007669"/>
    <property type="project" value="InterPro"/>
</dbReference>
<dbReference type="HAMAP" id="MF_00445">
    <property type="entry name" value="NDH1_NuoN_1"/>
    <property type="match status" value="1"/>
</dbReference>
<dbReference type="InterPro" id="IPR010096">
    <property type="entry name" value="NADH-Q_OxRdtase_suN/2"/>
</dbReference>
<dbReference type="InterPro" id="IPR001750">
    <property type="entry name" value="ND/Mrp_TM"/>
</dbReference>
<dbReference type="NCBIfam" id="TIGR01770">
    <property type="entry name" value="NDH_I_N"/>
    <property type="match status" value="1"/>
</dbReference>
<dbReference type="NCBIfam" id="NF004442">
    <property type="entry name" value="PRK05777.1-5"/>
    <property type="match status" value="1"/>
</dbReference>
<dbReference type="PANTHER" id="PTHR22773">
    <property type="entry name" value="NADH DEHYDROGENASE"/>
    <property type="match status" value="1"/>
</dbReference>
<dbReference type="Pfam" id="PF00361">
    <property type="entry name" value="Proton_antipo_M"/>
    <property type="match status" value="1"/>
</dbReference>
<dbReference type="PRINTS" id="PR01434">
    <property type="entry name" value="NADHDHGNASE5"/>
</dbReference>
<keyword id="KW-0997">Cell inner membrane</keyword>
<keyword id="KW-1003">Cell membrane</keyword>
<keyword id="KW-0472">Membrane</keyword>
<keyword id="KW-0520">NAD</keyword>
<keyword id="KW-0874">Quinone</keyword>
<keyword id="KW-1278">Translocase</keyword>
<keyword id="KW-0812">Transmembrane</keyword>
<keyword id="KW-1133">Transmembrane helix</keyword>
<keyword id="KW-0813">Transport</keyword>
<keyword id="KW-0830">Ubiquinone</keyword>
<gene>
    <name evidence="1" type="primary">nuoN</name>
    <name type="ordered locus">Rmag_0250</name>
</gene>
<organism>
    <name type="scientific">Ruthia magnifica subsp. Calyptogena magnifica</name>
    <dbReference type="NCBI Taxonomy" id="413404"/>
    <lineage>
        <taxon>Bacteria</taxon>
        <taxon>Pseudomonadati</taxon>
        <taxon>Pseudomonadota</taxon>
        <taxon>Gammaproteobacteria</taxon>
        <taxon>Candidatus Pseudothioglobaceae</taxon>
        <taxon>Candidatus Ruthturnera</taxon>
    </lineage>
</organism>
<evidence type="ECO:0000255" key="1">
    <source>
        <dbReference type="HAMAP-Rule" id="MF_00445"/>
    </source>
</evidence>